<evidence type="ECO:0000250" key="1">
    <source>
        <dbReference type="UniProtKB" id="Q9X519"/>
    </source>
</evidence>
<keyword id="KW-0324">Glycolysis</keyword>
<keyword id="KW-0413">Isomerase</keyword>
<keyword id="KW-0464">Manganese</keyword>
<keyword id="KW-0479">Metal-binding</keyword>
<reference key="1">
    <citation type="submission" date="2002-03" db="EMBL/GenBank/DDBJ databases">
        <title>Phytoplasma genomics: the Tomato big bud phytoplasma as a model.</title>
        <authorList>
            <person name="Streten C."/>
            <person name="Gibb K.S."/>
        </authorList>
    </citation>
    <scope>NUCLEOTIDE SEQUENCE [GENOMIC DNA]</scope>
</reference>
<feature type="chain" id="PRO_0000212224" description="2,3-bisphosphoglycerate-independent phosphoglycerate mutase">
    <location>
        <begin position="1" status="less than"/>
        <end position="81" status="greater than"/>
    </location>
</feature>
<feature type="active site" description="Phosphoserine intermediate" evidence="1">
    <location>
        <position position="14"/>
    </location>
</feature>
<feature type="binding site" evidence="1">
    <location>
        <position position="14"/>
    </location>
    <ligand>
        <name>Mn(2+)</name>
        <dbReference type="ChEBI" id="CHEBI:29035"/>
        <label>2</label>
    </ligand>
</feature>
<feature type="binding site" evidence="1">
    <location>
        <position position="75"/>
    </location>
    <ligand>
        <name>substrate</name>
    </ligand>
</feature>
<feature type="non-terminal residue">
    <location>
        <position position="1"/>
    </location>
</feature>
<feature type="non-terminal residue">
    <location>
        <position position="81"/>
    </location>
</feature>
<comment type="function">
    <text evidence="1">Catalyzes the interconversion of 2-phosphoglycerate and 3-phosphoglycerate.</text>
</comment>
<comment type="catalytic activity">
    <reaction evidence="1">
        <text>(2R)-2-phosphoglycerate = (2R)-3-phosphoglycerate</text>
        <dbReference type="Rhea" id="RHEA:15901"/>
        <dbReference type="ChEBI" id="CHEBI:58272"/>
        <dbReference type="ChEBI" id="CHEBI:58289"/>
        <dbReference type="EC" id="5.4.2.12"/>
    </reaction>
</comment>
<comment type="cofactor">
    <cofactor evidence="1">
        <name>Mn(2+)</name>
        <dbReference type="ChEBI" id="CHEBI:29035"/>
    </cofactor>
    <text evidence="1">Binds 2 manganese ions per subunit.</text>
</comment>
<comment type="pathway">
    <text evidence="1">Carbohydrate degradation; glycolysis; pyruvate from D-glyceraldehyde 3-phosphate: step 3/5.</text>
</comment>
<comment type="subunit">
    <text evidence="1">Monomer.</text>
</comment>
<comment type="similarity">
    <text evidence="1">Belongs to the BPG-independent phosphoglycerate mutase family.</text>
</comment>
<protein>
    <recommendedName>
        <fullName evidence="1">2,3-bisphosphoglycerate-independent phosphoglycerate mutase</fullName>
        <shortName evidence="1">BPG-independent PGAM</shortName>
        <shortName evidence="1">Phosphoglyceromutase</shortName>
        <shortName evidence="1">iPGM</shortName>
        <ecNumber evidence="1">5.4.2.12</ecNumber>
    </recommendedName>
</protein>
<sequence>GEAVGLPAQQMGNSEVGHLNLGAGRVVHQSLTYINRKIKDGSFFKNKCFLKVIQHVKTNKSKLHLLGLVSDGGVHSHLDHF</sequence>
<dbReference type="EC" id="5.4.2.12" evidence="1"/>
<dbReference type="EMBL" id="AF494526">
    <property type="protein sequence ID" value="AAM28551.1"/>
    <property type="molecule type" value="Genomic_DNA"/>
</dbReference>
<dbReference type="SMR" id="Q8L2S1"/>
<dbReference type="UniPathway" id="UPA00109">
    <property type="reaction ID" value="UER00186"/>
</dbReference>
<dbReference type="GO" id="GO:0005829">
    <property type="term" value="C:cytosol"/>
    <property type="evidence" value="ECO:0007669"/>
    <property type="project" value="TreeGrafter"/>
</dbReference>
<dbReference type="GO" id="GO:0030145">
    <property type="term" value="F:manganese ion binding"/>
    <property type="evidence" value="ECO:0007669"/>
    <property type="project" value="InterPro"/>
</dbReference>
<dbReference type="GO" id="GO:0004619">
    <property type="term" value="F:phosphoglycerate mutase activity"/>
    <property type="evidence" value="ECO:0007669"/>
    <property type="project" value="UniProtKB-EC"/>
</dbReference>
<dbReference type="GO" id="GO:0006007">
    <property type="term" value="P:glucose catabolic process"/>
    <property type="evidence" value="ECO:0007669"/>
    <property type="project" value="InterPro"/>
</dbReference>
<dbReference type="GO" id="GO:0006096">
    <property type="term" value="P:glycolytic process"/>
    <property type="evidence" value="ECO:0007669"/>
    <property type="project" value="UniProtKB-UniPathway"/>
</dbReference>
<dbReference type="Gene3D" id="3.40.1450.10">
    <property type="entry name" value="BPG-independent phosphoglycerate mutase, domain B"/>
    <property type="match status" value="1"/>
</dbReference>
<dbReference type="InterPro" id="IPR011258">
    <property type="entry name" value="BPG-indep_PGM_N"/>
</dbReference>
<dbReference type="InterPro" id="IPR036646">
    <property type="entry name" value="PGAM_B_sf"/>
</dbReference>
<dbReference type="InterPro" id="IPR005995">
    <property type="entry name" value="Pgm_bpd_ind"/>
</dbReference>
<dbReference type="PANTHER" id="PTHR31637">
    <property type="entry name" value="2,3-BISPHOSPHOGLYCERATE-INDEPENDENT PHOSPHOGLYCERATE MUTASE"/>
    <property type="match status" value="1"/>
</dbReference>
<dbReference type="PANTHER" id="PTHR31637:SF0">
    <property type="entry name" value="2,3-BISPHOSPHOGLYCERATE-INDEPENDENT PHOSPHOGLYCERATE MUTASE"/>
    <property type="match status" value="1"/>
</dbReference>
<dbReference type="Pfam" id="PF06415">
    <property type="entry name" value="iPGM_N"/>
    <property type="match status" value="1"/>
</dbReference>
<dbReference type="SUPFAM" id="SSF64158">
    <property type="entry name" value="2,3-Bisphosphoglycerate-independent phosphoglycerate mutase, substrate-binding domain"/>
    <property type="match status" value="1"/>
</dbReference>
<proteinExistence type="inferred from homology"/>
<name>GPMI_TOBBP</name>
<gene>
    <name type="primary">gpmI</name>
</gene>
<organism>
    <name type="scientific">Tomato big bud phytoplasma</name>
    <dbReference type="NCBI Taxonomy" id="35770"/>
    <lineage>
        <taxon>Bacteria</taxon>
        <taxon>Bacillati</taxon>
        <taxon>Mycoplasmatota</taxon>
        <taxon>Mollicutes</taxon>
        <taxon>Acholeplasmatales</taxon>
        <taxon>Acholeplasmataceae</taxon>
        <taxon>Candidatus Phytoplasma</taxon>
        <taxon>16SrI (Aster yellows group)</taxon>
    </lineage>
</organism>
<accession>Q8L2S1</accession>